<feature type="chain" id="PRO_0000441307" description="Pyrrolocin cluster transcription factor fsdR">
    <location>
        <begin position="1"/>
        <end position="772"/>
    </location>
</feature>
<feature type="DNA-binding region" description="Zn(2)-C6 fungal-type" evidence="1">
    <location>
        <begin position="46"/>
        <end position="74"/>
    </location>
</feature>
<feature type="region of interest" description="Disordered" evidence="2">
    <location>
        <begin position="1"/>
        <end position="43"/>
    </location>
</feature>
<feature type="region of interest" description="Disordered" evidence="2">
    <location>
        <begin position="64"/>
        <end position="93"/>
    </location>
</feature>
<feature type="region of interest" description="Disordered" evidence="2">
    <location>
        <begin position="124"/>
        <end position="179"/>
    </location>
</feature>
<feature type="compositionally biased region" description="Low complexity" evidence="2">
    <location>
        <begin position="77"/>
        <end position="91"/>
    </location>
</feature>
<comment type="function">
    <text evidence="4">Transcription factor that regulates the expression of the gene cluster that mediates the biosynthesis of pyrrolocin (PubMed:25226362).</text>
</comment>
<comment type="subcellular location">
    <subcellularLocation>
        <location evidence="1">Nucleus</location>
    </subcellularLocation>
</comment>
<dbReference type="EMBL" id="KM107910">
    <property type="protein sequence ID" value="AIP87509.1"/>
    <property type="molecule type" value="Genomic_DNA"/>
</dbReference>
<dbReference type="SMR" id="A0A089FQI6"/>
<dbReference type="GO" id="GO:0005634">
    <property type="term" value="C:nucleus"/>
    <property type="evidence" value="ECO:0007669"/>
    <property type="project" value="UniProtKB-SubCell"/>
</dbReference>
<dbReference type="GO" id="GO:0003677">
    <property type="term" value="F:DNA binding"/>
    <property type="evidence" value="ECO:0007669"/>
    <property type="project" value="UniProtKB-KW"/>
</dbReference>
<dbReference type="GO" id="GO:0000981">
    <property type="term" value="F:DNA-binding transcription factor activity, RNA polymerase II-specific"/>
    <property type="evidence" value="ECO:0007669"/>
    <property type="project" value="InterPro"/>
</dbReference>
<dbReference type="GO" id="GO:0008270">
    <property type="term" value="F:zinc ion binding"/>
    <property type="evidence" value="ECO:0007669"/>
    <property type="project" value="InterPro"/>
</dbReference>
<dbReference type="GO" id="GO:0006351">
    <property type="term" value="P:DNA-templated transcription"/>
    <property type="evidence" value="ECO:0007669"/>
    <property type="project" value="InterPro"/>
</dbReference>
<dbReference type="CDD" id="cd12148">
    <property type="entry name" value="fungal_TF_MHR"/>
    <property type="match status" value="1"/>
</dbReference>
<dbReference type="CDD" id="cd00067">
    <property type="entry name" value="GAL4"/>
    <property type="match status" value="1"/>
</dbReference>
<dbReference type="Gene3D" id="4.10.240.10">
    <property type="entry name" value="Zn(2)-C6 fungal-type DNA-binding domain"/>
    <property type="match status" value="1"/>
</dbReference>
<dbReference type="InterPro" id="IPR050613">
    <property type="entry name" value="Sec_Metabolite_Reg"/>
</dbReference>
<dbReference type="InterPro" id="IPR007219">
    <property type="entry name" value="Transcription_factor_dom_fun"/>
</dbReference>
<dbReference type="InterPro" id="IPR036864">
    <property type="entry name" value="Zn2-C6_fun-type_DNA-bd_sf"/>
</dbReference>
<dbReference type="InterPro" id="IPR001138">
    <property type="entry name" value="Zn2Cys6_DnaBD"/>
</dbReference>
<dbReference type="PANTHER" id="PTHR31001">
    <property type="entry name" value="UNCHARACTERIZED TRANSCRIPTIONAL REGULATORY PROTEIN"/>
    <property type="match status" value="1"/>
</dbReference>
<dbReference type="PANTHER" id="PTHR31001:SF74">
    <property type="entry name" value="ZN(II)2CYS6 TRANSCRIPTION FACTOR (EUROFUNG)"/>
    <property type="match status" value="1"/>
</dbReference>
<dbReference type="Pfam" id="PF04082">
    <property type="entry name" value="Fungal_trans"/>
    <property type="match status" value="1"/>
</dbReference>
<dbReference type="Pfam" id="PF00172">
    <property type="entry name" value="Zn_clus"/>
    <property type="match status" value="1"/>
</dbReference>
<dbReference type="SMART" id="SM00906">
    <property type="entry name" value="Fungal_trans"/>
    <property type="match status" value="1"/>
</dbReference>
<dbReference type="SMART" id="SM00066">
    <property type="entry name" value="GAL4"/>
    <property type="match status" value="1"/>
</dbReference>
<dbReference type="SUPFAM" id="SSF57701">
    <property type="entry name" value="Zn2/Cys6 DNA-binding domain"/>
    <property type="match status" value="1"/>
</dbReference>
<dbReference type="PROSITE" id="PS00463">
    <property type="entry name" value="ZN2_CY6_FUNGAL_1"/>
    <property type="match status" value="1"/>
</dbReference>
<dbReference type="PROSITE" id="PS50048">
    <property type="entry name" value="ZN2_CY6_FUNGAL_2"/>
    <property type="match status" value="1"/>
</dbReference>
<name>PRLR_FUNXX</name>
<evidence type="ECO:0000255" key="1">
    <source>
        <dbReference type="PROSITE-ProRule" id="PRU00227"/>
    </source>
</evidence>
<evidence type="ECO:0000256" key="2">
    <source>
        <dbReference type="SAM" id="MobiDB-lite"/>
    </source>
</evidence>
<evidence type="ECO:0000303" key="3">
    <source>
    </source>
</evidence>
<evidence type="ECO:0000305" key="4">
    <source>
    </source>
</evidence>
<accession>A0A089FQI6</accession>
<reference key="1">
    <citation type="journal article" date="2015" name="ACS Synth. Biol.">
        <title>Native promoter strategy for high-yielding synthesis and engineering of fungal secondary metabolites.</title>
        <authorList>
            <person name="Kakule T.B."/>
            <person name="Jadulco R.C."/>
            <person name="Koch M."/>
            <person name="Janso J.E."/>
            <person name="Barrows L.R."/>
            <person name="Schmidt E.W."/>
        </authorList>
    </citation>
    <scope>NUCLEOTIDE SEQUENCE [GENOMIC DNA]</scope>
    <scope>FUNCTION</scope>
</reference>
<sequence length="772" mass="85578">MSDAVTPCSSAKVPSVQEFITTSSDTQTDRPRPPLSRRRDKPQLSCNACRRRKVRCDRLHPCSNCSSRGHGSSCEYAPTTPTTGTAASTITEKPPLPGPLHGTASNMQNRIDQLESLVLGLMHQHQTGPSSRASPLEEPPPRPITPDQRAASPSVTGSDRILTFAPETQRDVSPTPSDYGSIRIQQTGVSYVSSSHWAAILGSIADLRSHFAQEDEAHSRSASHVQPPTAFPKPQLLYSSLVNETPASIVKSVPPRPVVDRLLSRYFNVLDIAPAYVRQQYEEFWKAPHAAPIMWVGLLFSMMCLSTQLQQALLGLNKPSPTLGHSRRPSQAAESQETVESYKEKAIQCLILGHYTKGGPYVLETLILYFLVECFHLKDMEVGVWMLVGNIVQVAILMGYHRDADHFPNISPFAGEMRRRVWAMIVQLDFSISTQLGLPRLVKESQTDTAEPRNLHDSDFDELTTELPTSRPETEVTPTLYVLAKLRLLSVGVKVADVATEPRPHSYAEVLELDHQINEARSALPSSLKWSGLGSSLNVPSQIIIQRIWLEVIAQQLKIVLHRKFLEPSRLQQHYGSSRSACLTAAMKILQLQRLVDEETQADGLLYQSRWRVSSAFINDFLLATSILCFCLQSHADEQKDTNRTSKDAEAAPVDIEEIRQLLNTSLVIWSRQCASSREARRAVAALRYVLGDSGIRSEPHPSEDVLSAPVPAAAISYFPGFSDLMTEYDLPSLGLEPTIEGTTWPVFTTNLNNNIDHWAGVTGFQQMDLSS</sequence>
<gene>
    <name evidence="3" type="primary">prlR</name>
</gene>
<keyword id="KW-0238">DNA-binding</keyword>
<keyword id="KW-0479">Metal-binding</keyword>
<keyword id="KW-0539">Nucleus</keyword>
<keyword id="KW-0804">Transcription</keyword>
<keyword id="KW-0805">Transcription regulation</keyword>
<keyword id="KW-0862">Zinc</keyword>
<protein>
    <recommendedName>
        <fullName evidence="3">Pyrrolocin cluster transcription factor fsdR</fullName>
    </recommendedName>
    <alternativeName>
        <fullName evidence="3">Pyrrolocin biosynthesis protein R</fullName>
    </alternativeName>
</protein>
<proteinExistence type="inferred from homology"/>
<organism>
    <name type="scientific">Fungal sp. (strain NRRL 50135)</name>
    <dbReference type="NCBI Taxonomy" id="1547289"/>
    <lineage>
        <taxon>Eukaryota</taxon>
        <taxon>Fungi</taxon>
    </lineage>
</organism>